<feature type="chain" id="PRO_0000119992" description="Putative F-box protein R757">
    <location>
        <begin position="1"/>
        <end position="650"/>
    </location>
</feature>
<feature type="domain" description="F-box" evidence="1">
    <location>
        <begin position="7"/>
        <end position="53"/>
    </location>
</feature>
<dbReference type="EMBL" id="AY653733">
    <property type="protein sequence ID" value="AAV51017.1"/>
    <property type="molecule type" value="Genomic_DNA"/>
</dbReference>
<dbReference type="SMR" id="Q5UPQ0"/>
<dbReference type="KEGG" id="vg:9925415"/>
<dbReference type="Proteomes" id="UP000001134">
    <property type="component" value="Genome"/>
</dbReference>
<dbReference type="Gene3D" id="3.80.10.10">
    <property type="entry name" value="Ribonuclease Inhibitor"/>
    <property type="match status" value="1"/>
</dbReference>
<dbReference type="InterPro" id="IPR001810">
    <property type="entry name" value="F-box_dom"/>
</dbReference>
<dbReference type="InterPro" id="IPR050648">
    <property type="entry name" value="F-box_LRR-repeat"/>
</dbReference>
<dbReference type="InterPro" id="IPR032675">
    <property type="entry name" value="LRR_dom_sf"/>
</dbReference>
<dbReference type="PANTHER" id="PTHR13382">
    <property type="entry name" value="MITOCHONDRIAL ATP SYNTHASE COUPLING FACTOR B"/>
    <property type="match status" value="1"/>
</dbReference>
<dbReference type="Pfam" id="PF00646">
    <property type="entry name" value="F-box"/>
    <property type="match status" value="1"/>
</dbReference>
<dbReference type="SUPFAM" id="SSF52047">
    <property type="entry name" value="RNI-like"/>
    <property type="match status" value="1"/>
</dbReference>
<dbReference type="PROSITE" id="PS50181">
    <property type="entry name" value="FBOX"/>
    <property type="match status" value="1"/>
</dbReference>
<accession>Q5UPQ0</accession>
<reference key="1">
    <citation type="journal article" date="2004" name="Science">
        <title>The 1.2-megabase genome sequence of Mimivirus.</title>
        <authorList>
            <person name="Raoult D."/>
            <person name="Audic S."/>
            <person name="Robert C."/>
            <person name="Abergel C."/>
            <person name="Renesto P."/>
            <person name="Ogata H."/>
            <person name="La Scola B."/>
            <person name="Susan M."/>
            <person name="Claverie J.-M."/>
        </authorList>
    </citation>
    <scope>NUCLEOTIDE SEQUENCE [LARGE SCALE GENOMIC DNA]</scope>
    <source>
        <strain>Rowbotham-Bradford</strain>
    </source>
</reference>
<protein>
    <recommendedName>
        <fullName>Putative F-box protein R757</fullName>
    </recommendedName>
</protein>
<name>YR757_MIMIV</name>
<sequence length="650" mass="76169">MLFILIFSVMESLPTELAYHVLSFIDFNSVVTYRLCSQESNNFIKSMLVFFPINFNNLVDQSTNYFEFVEKVDLQFCRQITDEFLSSFCRVKIINLRGCDKITDSGLKHLQHVKEINLAGCYQITNDGLLGLNNITFIDVSYCPKITFKGFANFNDDSVAVVQTRPLEYPKSKPYTLVDKKKINIRYYNNHPFLGKNNHAFQKDTNQSHSKNSISYLPRIIIAPKKIIDKIETERCRLFDSIYAVKPEFRDRVFMKNYEDLLPNTHLYDKQSALNRLYKKSNRRKFIDNLLSNKMDIMIGGSIGLFCTHKRCNFEPNDMDLYLKYIDSEKIRKIESIIYQSFIFRSIVVIRTSITITWLIQSTTDEITSIQLNIMNIKSWAEVFITYHADLTCIGYEILTNKFVYLDNRWNNILQNDTNYFSNILNMESANSIYKAASKYQQRGFTCVSLNDLCTDIQGNIAKSYDHHIYDSLVSLLSDKIYNKLNIHTSDTGYQNYYQKKYTNTNLIHYIFDKYRMSENISFASSVSHLQLPKIYPDIIMLSVYKINEILDTQQNNNTGTEFHQLSIHKQKNYINKTEKFFYSARSGAQYTGINHYNKLHTVCIVCKCGCDSFMTMNDFIGCQYEYSLDRGICSRIQCREYEYLELFLV</sequence>
<keyword id="KW-1185">Reference proteome</keyword>
<organism>
    <name type="scientific">Acanthamoeba polyphaga mimivirus</name>
    <name type="common">APMV</name>
    <dbReference type="NCBI Taxonomy" id="212035"/>
    <lineage>
        <taxon>Viruses</taxon>
        <taxon>Varidnaviria</taxon>
        <taxon>Bamfordvirae</taxon>
        <taxon>Nucleocytoviricota</taxon>
        <taxon>Megaviricetes</taxon>
        <taxon>Imitervirales</taxon>
        <taxon>Mimiviridae</taxon>
        <taxon>Megamimivirinae</taxon>
        <taxon>Mimivirus</taxon>
        <taxon>Mimivirus bradfordmassiliense</taxon>
    </lineage>
</organism>
<evidence type="ECO:0000255" key="1">
    <source>
        <dbReference type="PROSITE-ProRule" id="PRU00080"/>
    </source>
</evidence>
<proteinExistence type="predicted"/>
<organismHost>
    <name type="scientific">Acanthamoeba polyphaga</name>
    <name type="common">Amoeba</name>
    <dbReference type="NCBI Taxonomy" id="5757"/>
</organismHost>
<gene>
    <name type="ordered locus">MIMI_R757</name>
</gene>